<feature type="signal peptide" evidence="2">
    <location>
        <begin position="1"/>
        <end position="30"/>
    </location>
</feature>
<feature type="chain" id="PRO_0000287101" description="Transmembrane protein 132D">
    <location>
        <begin position="31"/>
        <end position="1097"/>
    </location>
</feature>
<feature type="topological domain" description="Extracellular" evidence="2">
    <location>
        <begin position="31"/>
        <end position="913"/>
    </location>
</feature>
<feature type="transmembrane region" description="Helical" evidence="2">
    <location>
        <begin position="914"/>
        <end position="934"/>
    </location>
</feature>
<feature type="topological domain" description="Cytoplasmic" evidence="2">
    <location>
        <begin position="935"/>
        <end position="1097"/>
    </location>
</feature>
<feature type="region of interest" description="Disordered" evidence="3">
    <location>
        <begin position="233"/>
        <end position="263"/>
    </location>
</feature>
<feature type="region of interest" description="Disordered" evidence="3">
    <location>
        <begin position="1021"/>
        <end position="1042"/>
    </location>
</feature>
<feature type="compositionally biased region" description="Basic and acidic residues" evidence="3">
    <location>
        <begin position="233"/>
        <end position="245"/>
    </location>
</feature>
<feature type="sequence conflict" description="In Ref. 1; BAC97815." evidence="7" ref="1">
    <original>E</original>
    <variation>G</variation>
    <location>
        <position position="426"/>
    </location>
</feature>
<proteinExistence type="evidence at transcript level"/>
<evidence type="ECO:0000250" key="1">
    <source>
        <dbReference type="UniProtKB" id="Q9BL47"/>
    </source>
</evidence>
<evidence type="ECO:0000255" key="2"/>
<evidence type="ECO:0000256" key="3">
    <source>
        <dbReference type="SAM" id="MobiDB-lite"/>
    </source>
</evidence>
<evidence type="ECO:0000269" key="4">
    <source>
    </source>
</evidence>
<evidence type="ECO:0000269" key="5">
    <source>
    </source>
</evidence>
<evidence type="ECO:0000303" key="6">
    <source>
    </source>
</evidence>
<evidence type="ECO:0000305" key="7"/>
<keyword id="KW-0472">Membrane</keyword>
<keyword id="KW-1185">Reference proteome</keyword>
<keyword id="KW-0732">Signal</keyword>
<keyword id="KW-0812">Transmembrane</keyword>
<keyword id="KW-1133">Transmembrane helix</keyword>
<reference key="1">
    <citation type="journal article" date="2003" name="J. Biochem.">
        <title>Molecular cloning of a novel transmembrane protein MOLT expressed by mature oligodendrocytes.</title>
        <authorList>
            <person name="Nomoto H."/>
            <person name="Yonezawa T."/>
            <person name="Itoh K."/>
            <person name="Ono K."/>
            <person name="Yamamoto K."/>
            <person name="Oohashi T."/>
            <person name="Shiraga F."/>
            <person name="Ohtsuki H."/>
            <person name="Ninomiya Y."/>
        </authorList>
    </citation>
    <scope>NUCLEOTIDE SEQUENCE [MRNA]</scope>
    <scope>FUNCTION</scope>
    <scope>TISSUE SPECIFICITY</scope>
</reference>
<reference key="2">
    <citation type="journal article" date="2005" name="Science">
        <title>The transcriptional landscape of the mammalian genome.</title>
        <authorList>
            <person name="Carninci P."/>
            <person name="Kasukawa T."/>
            <person name="Katayama S."/>
            <person name="Gough J."/>
            <person name="Frith M.C."/>
            <person name="Maeda N."/>
            <person name="Oyama R."/>
            <person name="Ravasi T."/>
            <person name="Lenhard B."/>
            <person name="Wells C."/>
            <person name="Kodzius R."/>
            <person name="Shimokawa K."/>
            <person name="Bajic V.B."/>
            <person name="Brenner S.E."/>
            <person name="Batalov S."/>
            <person name="Forrest A.R."/>
            <person name="Zavolan M."/>
            <person name="Davis M.J."/>
            <person name="Wilming L.G."/>
            <person name="Aidinis V."/>
            <person name="Allen J.E."/>
            <person name="Ambesi-Impiombato A."/>
            <person name="Apweiler R."/>
            <person name="Aturaliya R.N."/>
            <person name="Bailey T.L."/>
            <person name="Bansal M."/>
            <person name="Baxter L."/>
            <person name="Beisel K.W."/>
            <person name="Bersano T."/>
            <person name="Bono H."/>
            <person name="Chalk A.M."/>
            <person name="Chiu K.P."/>
            <person name="Choudhary V."/>
            <person name="Christoffels A."/>
            <person name="Clutterbuck D.R."/>
            <person name="Crowe M.L."/>
            <person name="Dalla E."/>
            <person name="Dalrymple B.P."/>
            <person name="de Bono B."/>
            <person name="Della Gatta G."/>
            <person name="di Bernardo D."/>
            <person name="Down T."/>
            <person name="Engstrom P."/>
            <person name="Fagiolini M."/>
            <person name="Faulkner G."/>
            <person name="Fletcher C.F."/>
            <person name="Fukushima T."/>
            <person name="Furuno M."/>
            <person name="Futaki S."/>
            <person name="Gariboldi M."/>
            <person name="Georgii-Hemming P."/>
            <person name="Gingeras T.R."/>
            <person name="Gojobori T."/>
            <person name="Green R.E."/>
            <person name="Gustincich S."/>
            <person name="Harbers M."/>
            <person name="Hayashi Y."/>
            <person name="Hensch T.K."/>
            <person name="Hirokawa N."/>
            <person name="Hill D."/>
            <person name="Huminiecki L."/>
            <person name="Iacono M."/>
            <person name="Ikeo K."/>
            <person name="Iwama A."/>
            <person name="Ishikawa T."/>
            <person name="Jakt M."/>
            <person name="Kanapin A."/>
            <person name="Katoh M."/>
            <person name="Kawasawa Y."/>
            <person name="Kelso J."/>
            <person name="Kitamura H."/>
            <person name="Kitano H."/>
            <person name="Kollias G."/>
            <person name="Krishnan S.P."/>
            <person name="Kruger A."/>
            <person name="Kummerfeld S.K."/>
            <person name="Kurochkin I.V."/>
            <person name="Lareau L.F."/>
            <person name="Lazarevic D."/>
            <person name="Lipovich L."/>
            <person name="Liu J."/>
            <person name="Liuni S."/>
            <person name="McWilliam S."/>
            <person name="Madan Babu M."/>
            <person name="Madera M."/>
            <person name="Marchionni L."/>
            <person name="Matsuda H."/>
            <person name="Matsuzawa S."/>
            <person name="Miki H."/>
            <person name="Mignone F."/>
            <person name="Miyake S."/>
            <person name="Morris K."/>
            <person name="Mottagui-Tabar S."/>
            <person name="Mulder N."/>
            <person name="Nakano N."/>
            <person name="Nakauchi H."/>
            <person name="Ng P."/>
            <person name="Nilsson R."/>
            <person name="Nishiguchi S."/>
            <person name="Nishikawa S."/>
            <person name="Nori F."/>
            <person name="Ohara O."/>
            <person name="Okazaki Y."/>
            <person name="Orlando V."/>
            <person name="Pang K.C."/>
            <person name="Pavan W.J."/>
            <person name="Pavesi G."/>
            <person name="Pesole G."/>
            <person name="Petrovsky N."/>
            <person name="Piazza S."/>
            <person name="Reed J."/>
            <person name="Reid J.F."/>
            <person name="Ring B.Z."/>
            <person name="Ringwald M."/>
            <person name="Rost B."/>
            <person name="Ruan Y."/>
            <person name="Salzberg S.L."/>
            <person name="Sandelin A."/>
            <person name="Schneider C."/>
            <person name="Schoenbach C."/>
            <person name="Sekiguchi K."/>
            <person name="Semple C.A."/>
            <person name="Seno S."/>
            <person name="Sessa L."/>
            <person name="Sheng Y."/>
            <person name="Shibata Y."/>
            <person name="Shimada H."/>
            <person name="Shimada K."/>
            <person name="Silva D."/>
            <person name="Sinclair B."/>
            <person name="Sperling S."/>
            <person name="Stupka E."/>
            <person name="Sugiura K."/>
            <person name="Sultana R."/>
            <person name="Takenaka Y."/>
            <person name="Taki K."/>
            <person name="Tammoja K."/>
            <person name="Tan S.L."/>
            <person name="Tang S."/>
            <person name="Taylor M.S."/>
            <person name="Tegner J."/>
            <person name="Teichmann S.A."/>
            <person name="Ueda H.R."/>
            <person name="van Nimwegen E."/>
            <person name="Verardo R."/>
            <person name="Wei C.L."/>
            <person name="Yagi K."/>
            <person name="Yamanishi H."/>
            <person name="Zabarovsky E."/>
            <person name="Zhu S."/>
            <person name="Zimmer A."/>
            <person name="Hide W."/>
            <person name="Bult C."/>
            <person name="Grimmond S.M."/>
            <person name="Teasdale R.D."/>
            <person name="Liu E.T."/>
            <person name="Brusic V."/>
            <person name="Quackenbush J."/>
            <person name="Wahlestedt C."/>
            <person name="Mattick J.S."/>
            <person name="Hume D.A."/>
            <person name="Kai C."/>
            <person name="Sasaki D."/>
            <person name="Tomaru Y."/>
            <person name="Fukuda S."/>
            <person name="Kanamori-Katayama M."/>
            <person name="Suzuki M."/>
            <person name="Aoki J."/>
            <person name="Arakawa T."/>
            <person name="Iida J."/>
            <person name="Imamura K."/>
            <person name="Itoh M."/>
            <person name="Kato T."/>
            <person name="Kawaji H."/>
            <person name="Kawagashira N."/>
            <person name="Kawashima T."/>
            <person name="Kojima M."/>
            <person name="Kondo S."/>
            <person name="Konno H."/>
            <person name="Nakano K."/>
            <person name="Ninomiya N."/>
            <person name="Nishio T."/>
            <person name="Okada M."/>
            <person name="Plessy C."/>
            <person name="Shibata K."/>
            <person name="Shiraki T."/>
            <person name="Suzuki S."/>
            <person name="Tagami M."/>
            <person name="Waki K."/>
            <person name="Watahiki A."/>
            <person name="Okamura-Oho Y."/>
            <person name="Suzuki H."/>
            <person name="Kawai J."/>
            <person name="Hayashizaki Y."/>
        </authorList>
    </citation>
    <scope>NUCLEOTIDE SEQUENCE [LARGE SCALE MRNA]</scope>
    <source>
        <strain>C57BL/6J</strain>
        <tissue>Hippocampus</tissue>
    </source>
</reference>
<reference key="3">
    <citation type="journal article" date="2004" name="Genome Res.">
        <title>The status, quality, and expansion of the NIH full-length cDNA project: the Mammalian Gene Collection (MGC).</title>
        <authorList>
            <consortium name="The MGC Project Team"/>
        </authorList>
    </citation>
    <scope>NUCLEOTIDE SEQUENCE [LARGE SCALE MRNA]</scope>
    <source>
        <tissue>Brain</tissue>
    </source>
</reference>
<reference key="4">
    <citation type="journal article" date="2009" name="PLoS Biol.">
        <title>Lineage-specific biology revealed by a finished genome assembly of the mouse.</title>
        <authorList>
            <person name="Church D.M."/>
            <person name="Goodstadt L."/>
            <person name="Hillier L.W."/>
            <person name="Zody M.C."/>
            <person name="Goldstein S."/>
            <person name="She X."/>
            <person name="Bult C.J."/>
            <person name="Agarwala R."/>
            <person name="Cherry J.L."/>
            <person name="DiCuccio M."/>
            <person name="Hlavina W."/>
            <person name="Kapustin Y."/>
            <person name="Meric P."/>
            <person name="Maglott D."/>
            <person name="Birtle Z."/>
            <person name="Marques A.C."/>
            <person name="Graves T."/>
            <person name="Zhou S."/>
            <person name="Teague B."/>
            <person name="Potamousis K."/>
            <person name="Churas C."/>
            <person name="Place M."/>
            <person name="Herschleb J."/>
            <person name="Runnheim R."/>
            <person name="Forrest D."/>
            <person name="Amos-Landgraf J."/>
            <person name="Schwartz D.C."/>
            <person name="Cheng Z."/>
            <person name="Lindblad-Toh K."/>
            <person name="Eichler E.E."/>
            <person name="Ponting C.P."/>
        </authorList>
    </citation>
    <scope>NUCLEOTIDE SEQUENCE [LARGE SCALE GENOMIC DNA]</scope>
    <source>
        <strain>C57BL/6J</strain>
    </source>
</reference>
<reference key="5">
    <citation type="journal article" date="2022" name="Gene Expr. Patterns">
        <title>Differential expression of the Tmem132 family genes in the developing mouse nervous system.</title>
        <authorList>
            <person name="Wang Y."/>
            <person name="Herzig G."/>
            <person name="Molano C."/>
            <person name="Liu A."/>
        </authorList>
    </citation>
    <scope>DEVELOPMENTAL STAGE</scope>
</reference>
<organism>
    <name type="scientific">Mus musculus</name>
    <name type="common">Mouse</name>
    <dbReference type="NCBI Taxonomy" id="10090"/>
    <lineage>
        <taxon>Eukaryota</taxon>
        <taxon>Metazoa</taxon>
        <taxon>Chordata</taxon>
        <taxon>Craniata</taxon>
        <taxon>Vertebrata</taxon>
        <taxon>Euteleostomi</taxon>
        <taxon>Mammalia</taxon>
        <taxon>Eutheria</taxon>
        <taxon>Euarchontoglires</taxon>
        <taxon>Glires</taxon>
        <taxon>Rodentia</taxon>
        <taxon>Myomorpha</taxon>
        <taxon>Muroidea</taxon>
        <taxon>Muridae</taxon>
        <taxon>Murinae</taxon>
        <taxon>Mus</taxon>
        <taxon>Mus</taxon>
    </lineage>
</organism>
<name>T132D_MOUSE</name>
<sequence length="1097" mass="121488">MCPSEMGTLWYLWSPVLISLAALFSKVTEGRGILESIQRFSLLPTYLPVTYHINNADVSFFLKEANQDIMRNSSLQSRVESFLIYKSRRLPVLNASYGPFSLEQVVPQDLMLPSNPFGFTNTFSLNWRLKAYILQEKVYLSHPKVQVLFHIVGRDWDDHRDENLPCLRVFAFRETREVRGSCRLGGALGLCVAQLEMLPGWFSPPSVVSGRRRPTEQPEGNPVELYYAVQPGDERGDCAKEDSRKSGGTPAGHNDVDESSPPLHRIGSVFLRETPSSPPLKELRLDSNVAVHYVPKTVRQGDVLTFPISVSRNCTEDRFTLRAKVKKGVSIVGVRASSSSIWDVRQSTEYTGKYAPAVIVCQKKSAGSEKSVADASYEVMKIDIEVEAPSDPPTTQLVTWQVEYPGEITSDLGVSKIYVSQKDLIEVIPLAMEAEILNTAILTGKTVAVPVKVISVEEDGTVQGLLDSVECRSSDEDVVKVSDRCDYVFVNGKEMKGKVNVVVSFTYQHLSSPLEMTVWVPRLPLQIEVSDMELNQIKGWRVPIVSNKRPARDSEEEDDDEKKGRGCTLQYQHAMVRVLTQFVAEAPDPGGHLAYLLGSDWQVDITELITDFMQVEEPRIAKLQGGQILTGQELGMTTIQILSPLSDAILAEKTITVLDEKVTITDLGVQLVTGLSLSLQLSPGSNRAIFATAMAQELLQRPKQEAAISCWVQFSDGSVTPLDIYDEKDFSLMATSLDEKVVSILQDPKFKWPIIAAENEGQGALVKVEMLISESCQKSKRKSVLAVGTASIKVKFGQNDANPNSSESGHLGAGLHVENINDRRSKKPFQEWGSPEGPFYSSSSMGLMEGWGSTTKRPTFQKKEGQENLLDDIILSQTMATDLTSFPDQMDLPGSNVGTEEHDLDQAAKGLSDLEIGMYALLGVFCLAILVFLINCVTFALKYRHKQVPFEEQEGLSHSHDWVGLSNRTELLGNHMNFASSQEEQITAIDRGLDFEESKLLLSSNSQNSINGQMFRSTGAMLTDDQEQKSEPPTSPTSKRKRVTFSTFSAISSDDGCPSGNTMVLSNEDDIKWVCQGLDPGECTEPHSCMERLHEHV</sequence>
<protein>
    <recommendedName>
        <fullName>Transmembrane protein 132D</fullName>
    </recommendedName>
    <alternativeName>
        <fullName evidence="6">Mature oligodendrocytes transmembrane protein</fullName>
        <shortName>Mature OL transmembrane protein</shortName>
    </alternativeName>
</protein>
<gene>
    <name type="primary">Tmem132d</name>
    <name evidence="6" type="synonym">Molt</name>
</gene>
<comment type="function">
    <text evidence="1">Regulates neuronal morphology via inhibition of the WAVE regulatory complex (WCR), a complex that controls F-actin cytoskeletal dynamics.</text>
</comment>
<comment type="subcellular location">
    <subcellularLocation>
        <location evidence="7">Membrane</location>
        <topology evidence="7">Single-pass type I membrane protein</topology>
    </subcellularLocation>
</comment>
<comment type="tissue specificity">
    <text evidence="4">Expressed in mature oligodendrocytes in the white and gray matter of the brain.</text>
</comment>
<comment type="developmental stage">
    <text evidence="5">At 14.5. dpc expressed at low level in the hypothalamus. At 18.5 dpc in the hippocampus expression is higher in the CA1 region than in CA3 region, and absent in the dentate gyrus.</text>
</comment>
<comment type="similarity">
    <text evidence="7">Belongs to the TMEM132 family.</text>
</comment>
<dbReference type="EMBL" id="AB100355">
    <property type="protein sequence ID" value="BAC97815.1"/>
    <property type="molecule type" value="mRNA"/>
</dbReference>
<dbReference type="EMBL" id="AK083210">
    <property type="protein sequence ID" value="BAC38810.1"/>
    <property type="molecule type" value="mRNA"/>
</dbReference>
<dbReference type="EMBL" id="AC241619">
    <property type="status" value="NOT_ANNOTATED_CDS"/>
    <property type="molecule type" value="Genomic_DNA"/>
</dbReference>
<dbReference type="EMBL" id="AC166914">
    <property type="status" value="NOT_ANNOTATED_CDS"/>
    <property type="molecule type" value="Genomic_DNA"/>
</dbReference>
<dbReference type="EMBL" id="AC123710">
    <property type="status" value="NOT_ANNOTATED_CDS"/>
    <property type="molecule type" value="Genomic_DNA"/>
</dbReference>
<dbReference type="EMBL" id="AC107666">
    <property type="status" value="NOT_ANNOTATED_CDS"/>
    <property type="molecule type" value="Genomic_DNA"/>
</dbReference>
<dbReference type="EMBL" id="AC138766">
    <property type="status" value="NOT_ANNOTATED_CDS"/>
    <property type="molecule type" value="Genomic_DNA"/>
</dbReference>
<dbReference type="EMBL" id="AC144908">
    <property type="status" value="NOT_ANNOTATED_CDS"/>
    <property type="molecule type" value="Genomic_DNA"/>
</dbReference>
<dbReference type="EMBL" id="BC140953">
    <property type="protein sequence ID" value="AAI40954.1"/>
    <property type="molecule type" value="mRNA"/>
</dbReference>
<dbReference type="CCDS" id="CCDS39287.1"/>
<dbReference type="RefSeq" id="NP_766473.1">
    <property type="nucleotide sequence ID" value="NM_172885.2"/>
</dbReference>
<dbReference type="BioGRID" id="232496">
    <property type="interactions" value="2"/>
</dbReference>
<dbReference type="FunCoup" id="Q76HP3">
    <property type="interactions" value="29"/>
</dbReference>
<dbReference type="STRING" id="10090.ENSMUSP00000043633"/>
<dbReference type="GlyGen" id="Q76HP3">
    <property type="glycosylation" value="2 sites, 1 N-linked glycan (1 site)"/>
</dbReference>
<dbReference type="iPTMnet" id="Q76HP3"/>
<dbReference type="PhosphoSitePlus" id="Q76HP3"/>
<dbReference type="PaxDb" id="10090-ENSMUSP00000043633"/>
<dbReference type="ProteomicsDB" id="254521"/>
<dbReference type="ProteomicsDB" id="345269"/>
<dbReference type="Antibodypedia" id="19379">
    <property type="antibodies" value="86 antibodies from 20 providers"/>
</dbReference>
<dbReference type="DNASU" id="243274"/>
<dbReference type="Ensembl" id="ENSMUST00000044441.8">
    <property type="protein sequence ID" value="ENSMUSP00000043633.7"/>
    <property type="gene ID" value="ENSMUSG00000034310.9"/>
</dbReference>
<dbReference type="GeneID" id="243274"/>
<dbReference type="KEGG" id="mmu:243274"/>
<dbReference type="UCSC" id="uc008zse.1">
    <property type="organism name" value="mouse"/>
</dbReference>
<dbReference type="AGR" id="MGI:3044963"/>
<dbReference type="CTD" id="121256"/>
<dbReference type="MGI" id="MGI:3044963">
    <property type="gene designation" value="Tmem132d"/>
</dbReference>
<dbReference type="VEuPathDB" id="HostDB:ENSMUSG00000034310"/>
<dbReference type="eggNOG" id="KOG4789">
    <property type="taxonomic scope" value="Eukaryota"/>
</dbReference>
<dbReference type="GeneTree" id="ENSGT00940000158942"/>
<dbReference type="InParanoid" id="Q76HP3"/>
<dbReference type="OMA" id="DECPTRN"/>
<dbReference type="OrthoDB" id="10026202at2759"/>
<dbReference type="PhylomeDB" id="Q76HP3"/>
<dbReference type="TreeFam" id="TF314981"/>
<dbReference type="BioGRID-ORCS" id="243274">
    <property type="hits" value="2 hits in 78 CRISPR screens"/>
</dbReference>
<dbReference type="ChiTaRS" id="Tmem132d">
    <property type="organism name" value="mouse"/>
</dbReference>
<dbReference type="PRO" id="PR:Q76HP3"/>
<dbReference type="Proteomes" id="UP000000589">
    <property type="component" value="Chromosome 5"/>
</dbReference>
<dbReference type="RNAct" id="Q76HP3">
    <property type="molecule type" value="protein"/>
</dbReference>
<dbReference type="Bgee" id="ENSMUSG00000034310">
    <property type="expression patterns" value="Expressed in animal zygote and 53 other cell types or tissues"/>
</dbReference>
<dbReference type="GO" id="GO:0016020">
    <property type="term" value="C:membrane"/>
    <property type="evidence" value="ECO:0007669"/>
    <property type="project" value="UniProtKB-SubCell"/>
</dbReference>
<dbReference type="InterPro" id="IPR055422">
    <property type="entry name" value="Ig_TMEM132_2nd"/>
</dbReference>
<dbReference type="InterPro" id="IPR055423">
    <property type="entry name" value="Ig_TMEM132_5th"/>
</dbReference>
<dbReference type="InterPro" id="IPR055424">
    <property type="entry name" value="Ig_TMEM132_6th"/>
</dbReference>
<dbReference type="InterPro" id="IPR026307">
    <property type="entry name" value="TMEM132"/>
</dbReference>
<dbReference type="InterPro" id="IPR055421">
    <property type="entry name" value="TMEM132_3rd"/>
</dbReference>
<dbReference type="InterPro" id="IPR031436">
    <property type="entry name" value="TMEM132_C"/>
</dbReference>
<dbReference type="InterPro" id="IPR031437">
    <property type="entry name" value="TMEM132_M"/>
</dbReference>
<dbReference type="InterPro" id="IPR031435">
    <property type="entry name" value="TMEM132_N"/>
</dbReference>
<dbReference type="PANTHER" id="PTHR13388">
    <property type="entry name" value="DETONATOR, ISOFORM E"/>
    <property type="match status" value="1"/>
</dbReference>
<dbReference type="PANTHER" id="PTHR13388:SF2">
    <property type="entry name" value="TRANSMEMBRANE PROTEIN 132D"/>
    <property type="match status" value="1"/>
</dbReference>
<dbReference type="Pfam" id="PF23481">
    <property type="entry name" value="Ig_TMEM132_2nd"/>
    <property type="match status" value="1"/>
</dbReference>
<dbReference type="Pfam" id="PF16070">
    <property type="entry name" value="Ig_TMEM132_4th"/>
    <property type="match status" value="1"/>
</dbReference>
<dbReference type="Pfam" id="PF23486">
    <property type="entry name" value="Ig_TMEM132_5th"/>
    <property type="match status" value="1"/>
</dbReference>
<dbReference type="Pfam" id="PF23487">
    <property type="entry name" value="Ig_TMEM132_6th"/>
    <property type="match status" value="1"/>
</dbReference>
<dbReference type="Pfam" id="PF23039">
    <property type="entry name" value="TMEM132_3rd"/>
    <property type="match status" value="1"/>
</dbReference>
<dbReference type="Pfam" id="PF15706">
    <property type="entry name" value="TMEM132_C"/>
    <property type="match status" value="1"/>
</dbReference>
<dbReference type="Pfam" id="PF15705">
    <property type="entry name" value="TMEM132_N"/>
    <property type="match status" value="1"/>
</dbReference>
<accession>Q76HP3</accession>
<accession>A0A0R4J0I2</accession>
<accession>B2RU39</accession>
<accession>Q8C422</accession>